<dbReference type="EMBL" id="AEJS01000053">
    <property type="protein sequence ID" value="EGA85415.1"/>
    <property type="molecule type" value="Genomic_DNA"/>
</dbReference>
<dbReference type="SMR" id="E7QJD3"/>
<dbReference type="HOGENOM" id="CLU_026673_3_3_1"/>
<dbReference type="OrthoDB" id="3509362at2759"/>
<dbReference type="GO" id="GO:0005811">
    <property type="term" value="C:lipid droplet"/>
    <property type="evidence" value="ECO:0007669"/>
    <property type="project" value="UniProtKB-SubCell"/>
</dbReference>
<dbReference type="GO" id="GO:0005739">
    <property type="term" value="C:mitochondrion"/>
    <property type="evidence" value="ECO:0007669"/>
    <property type="project" value="UniProtKB-SubCell"/>
</dbReference>
<dbReference type="CDD" id="cd08247">
    <property type="entry name" value="AST1_like"/>
    <property type="match status" value="1"/>
</dbReference>
<dbReference type="Gene3D" id="3.90.180.10">
    <property type="entry name" value="Medium-chain alcohol dehydrogenases, catalytic domain"/>
    <property type="match status" value="1"/>
</dbReference>
<dbReference type="Gene3D" id="3.40.50.720">
    <property type="entry name" value="NAD(P)-binding Rossmann-like Domain"/>
    <property type="match status" value="1"/>
</dbReference>
<dbReference type="InterPro" id="IPR013154">
    <property type="entry name" value="ADH-like_N"/>
</dbReference>
<dbReference type="InterPro" id="IPR011032">
    <property type="entry name" value="GroES-like_sf"/>
</dbReference>
<dbReference type="InterPro" id="IPR036291">
    <property type="entry name" value="NAD(P)-bd_dom_sf"/>
</dbReference>
<dbReference type="InterPro" id="IPR050700">
    <property type="entry name" value="YIM1/Zinc_Alcohol_DH_Fams"/>
</dbReference>
<dbReference type="PANTHER" id="PTHR11695">
    <property type="entry name" value="ALCOHOL DEHYDROGENASE RELATED"/>
    <property type="match status" value="1"/>
</dbReference>
<dbReference type="PANTHER" id="PTHR11695:SF294">
    <property type="entry name" value="RETICULON-4-INTERACTING PROTEIN 1, MITOCHONDRIAL"/>
    <property type="match status" value="1"/>
</dbReference>
<dbReference type="Pfam" id="PF08240">
    <property type="entry name" value="ADH_N"/>
    <property type="match status" value="1"/>
</dbReference>
<dbReference type="Pfam" id="PF13602">
    <property type="entry name" value="ADH_zinc_N_2"/>
    <property type="match status" value="1"/>
</dbReference>
<dbReference type="SUPFAM" id="SSF50129">
    <property type="entry name" value="GroES-like"/>
    <property type="match status" value="1"/>
</dbReference>
<dbReference type="SUPFAM" id="SSF51735">
    <property type="entry name" value="NAD(P)-binding Rossmann-fold domains"/>
    <property type="match status" value="1"/>
</dbReference>
<organism>
    <name type="scientific">Saccharomyces cerevisiae (strain Zymaflore VL3)</name>
    <name type="common">Baker's yeast</name>
    <dbReference type="NCBI Taxonomy" id="764100"/>
    <lineage>
        <taxon>Eukaryota</taxon>
        <taxon>Fungi</taxon>
        <taxon>Dikarya</taxon>
        <taxon>Ascomycota</taxon>
        <taxon>Saccharomycotina</taxon>
        <taxon>Saccharomycetes</taxon>
        <taxon>Saccharomycetales</taxon>
        <taxon>Saccharomycetaceae</taxon>
        <taxon>Saccharomyces</taxon>
    </lineage>
</organism>
<comment type="subcellular location">
    <subcellularLocation>
        <location evidence="1">Lipid droplet</location>
    </subcellularLocation>
    <subcellularLocation>
        <location evidence="1">Mitochondrion</location>
    </subcellularLocation>
</comment>
<comment type="similarity">
    <text evidence="2">Belongs to the YIM1 family.</text>
</comment>
<keyword id="KW-0551">Lipid droplet</keyword>
<keyword id="KW-0496">Mitochondrion</keyword>
<accession>E7QJD3</accession>
<reference key="1">
    <citation type="journal article" date="2011" name="PLoS Genet.">
        <title>Whole-genome comparison reveals novel genetic elements that characterize the genome of industrial strains of Saccharomyces cerevisiae.</title>
        <authorList>
            <person name="Borneman A.R."/>
            <person name="Desany B.A."/>
            <person name="Riches D."/>
            <person name="Affourtit J.P."/>
            <person name="Forgan A.H."/>
            <person name="Pretorius I.S."/>
            <person name="Egholm M."/>
            <person name="Chambers P.J."/>
        </authorList>
    </citation>
    <scope>NUCLEOTIDE SEQUENCE [LARGE SCALE GENOMIC DNA]</scope>
    <source>
        <strain>Zymaflore VL3</strain>
    </source>
</reference>
<proteinExistence type="inferred from homology"/>
<evidence type="ECO:0000250" key="1"/>
<evidence type="ECO:0000305" key="2"/>
<feature type="chain" id="PRO_0000409688" description="Protein YIM1">
    <location>
        <begin position="1"/>
        <end position="365"/>
    </location>
</feature>
<protein>
    <recommendedName>
        <fullName>Protein YIM1</fullName>
    </recommendedName>
</protein>
<gene>
    <name type="primary">YIM1</name>
    <name type="ORF">VL3_3744</name>
</gene>
<sequence length="365" mass="41676">MSDEIVTNKSVTYVNNTTPVTITSSELDLRSCYQDDEVVIEVHAAALNPIDFITHQLCNSYIFGKYPKTYSRDYSGVIIKAGKDVDNRWKVGDKVNGMYSHIYGERGTLTHYLILNPAKDIPITHMVEVPKDENDPYDDFVYAAAWPLTFGTAFSTLYDFKKDWTSDSKVLVIGASTSVSYAFVHIAKNYFNIGTVVGICSKNSIERNKKLGYDYLVPYDEGSIVENVKKLKQIVLENDKFDMIFDSVGNHDFFPVIDQFLKPKAKNSFYVTIAGNNKANYKNISWRDFVSLSSILKAINPFKKYNWRFGHPYPPNNFIEVGNEMIKKGTYKPPIDSVYEFDQYKEAIDRLMSNRAKGKVVVKMK</sequence>
<name>YIM1_YEASZ</name>